<proteinExistence type="evidence at protein level"/>
<evidence type="ECO:0000250" key="1"/>
<evidence type="ECO:0000256" key="2">
    <source>
        <dbReference type="SAM" id="MobiDB-lite"/>
    </source>
</evidence>
<evidence type="ECO:0000269" key="3">
    <source>
    </source>
</evidence>
<evidence type="ECO:0000269" key="4">
    <source>
    </source>
</evidence>
<evidence type="ECO:0000269" key="5">
    <source>
    </source>
</evidence>
<evidence type="ECO:0000305" key="6"/>
<sequence>MPKSPSKSSPRKGSPRKGSPRKGSPKRGGKGAKRAGKGGRRNVVKRRRRRRESYGIYIYKVLKQVHPDTGISSRGMSVMNSFVNDVFERIAGEASRLTSANRRSTISSREIQTAVRLLLPGELAKHAVSEGTKAVTKYTTARR</sequence>
<comment type="function">
    <text>Core component of nucleosome. Nucleosomes wrap and compact DNA into chromatin, limiting DNA accessibility to the cellular machineries which require DNA as a template. Histones thereby play a central role in transcription regulation, DNA repair, DNA replication and chromosomal stability. DNA accessibility is regulated via a complex set of post-translational modifications of histones, also called histone code, and nucleosome remodeling.</text>
</comment>
<comment type="subunit">
    <text>The nucleosome is a histone octamer containing two molecules each of H2A, H2B, H3 and H4 assembled in one H3-H4 heterotetramer and two H2A-H2B heterodimers. The octamer wraps approximately 147 bp of DNA.</text>
</comment>
<comment type="subcellular location">
    <subcellularLocation>
        <location>Nucleus</location>
    </subcellularLocation>
    <subcellularLocation>
        <location>Chromosome</location>
    </subcellularLocation>
</comment>
<comment type="developmental stage">
    <text evidence="4">Expressed only during spermatogenesis.</text>
</comment>
<comment type="domain">
    <text>Contains 5 SPKK motifs which may interact with the minor groove of A/T-rich DNA sites. Phosphorylation of this motif may regulate DNA binding. This motif is reiterated in both termini of histone H1 and in the C-terminus of plant H2A, but its presence in the N-terminus seems to be unique to sea urchin histones H2B.</text>
</comment>
<comment type="PTM">
    <text evidence="1">Monoubiquitination of Lys-137 gives a specific tag for epigenetic transcriptional activation and is also prerequisite for histone H3 'Lys-4' and 'Lys-79' methylation.</text>
</comment>
<comment type="PTM">
    <text evidence="1">Phosphorylated on SPKK motifs 3, 4 and 5; which may regulate DNA binding. Dephosphorylated during maturation of spermatids to mature sperm and rephosphorylated at fertilization (By similarity).</text>
</comment>
<comment type="PTM">
    <text evidence="1">GlcNAcylation at Ser-129 promotes monoubiquitination of Lys-137. It fluctuates in response to extracellular glucose, and associates with transcribed genes (By similarity).</text>
</comment>
<comment type="similarity">
    <text evidence="6">Belongs to the histone H2B family.</text>
</comment>
<protein>
    <recommendedName>
        <fullName>Histone H2B.2, sperm</fullName>
    </recommendedName>
</protein>
<keyword id="KW-0158">Chromosome</keyword>
<keyword id="KW-0903">Direct protein sequencing</keyword>
<keyword id="KW-0238">DNA-binding</keyword>
<keyword id="KW-0325">Glycoprotein</keyword>
<keyword id="KW-1017">Isopeptide bond</keyword>
<keyword id="KW-0544">Nucleosome core</keyword>
<keyword id="KW-0539">Nucleus</keyword>
<keyword id="KW-0597">Phosphoprotein</keyword>
<keyword id="KW-0832">Ubl conjugation</keyword>
<organism>
    <name type="scientific">Psammechinus miliaris</name>
    <name type="common">Green sea urchin</name>
    <name type="synonym">Echinus miliaris</name>
    <dbReference type="NCBI Taxonomy" id="7660"/>
    <lineage>
        <taxon>Eukaryota</taxon>
        <taxon>Metazoa</taxon>
        <taxon>Echinodermata</taxon>
        <taxon>Eleutherozoa</taxon>
        <taxon>Echinozoa</taxon>
        <taxon>Echinoidea</taxon>
        <taxon>Euechinoidea</taxon>
        <taxon>Echinacea</taxon>
        <taxon>Camarodonta</taxon>
        <taxon>Echinidea</taxon>
        <taxon>Parechinidae</taxon>
        <taxon>Psammechinus</taxon>
    </lineage>
</organism>
<dbReference type="EMBL" id="M11087">
    <property type="protein sequence ID" value="AAA30021.1"/>
    <property type="molecule type" value="mRNA"/>
</dbReference>
<dbReference type="SMR" id="Q27750"/>
<dbReference type="iPTMnet" id="Q27750"/>
<dbReference type="GO" id="GO:0000786">
    <property type="term" value="C:nucleosome"/>
    <property type="evidence" value="ECO:0007669"/>
    <property type="project" value="UniProtKB-KW"/>
</dbReference>
<dbReference type="GO" id="GO:0005634">
    <property type="term" value="C:nucleus"/>
    <property type="evidence" value="ECO:0007669"/>
    <property type="project" value="UniProtKB-SubCell"/>
</dbReference>
<dbReference type="GO" id="GO:0003677">
    <property type="term" value="F:DNA binding"/>
    <property type="evidence" value="ECO:0007669"/>
    <property type="project" value="UniProtKB-KW"/>
</dbReference>
<dbReference type="GO" id="GO:0046982">
    <property type="term" value="F:protein heterodimerization activity"/>
    <property type="evidence" value="ECO:0007669"/>
    <property type="project" value="InterPro"/>
</dbReference>
<dbReference type="GO" id="GO:0030527">
    <property type="term" value="F:structural constituent of chromatin"/>
    <property type="evidence" value="ECO:0007669"/>
    <property type="project" value="InterPro"/>
</dbReference>
<dbReference type="CDD" id="cd22910">
    <property type="entry name" value="HFD_H2B"/>
    <property type="match status" value="1"/>
</dbReference>
<dbReference type="FunFam" id="1.10.20.10:FF:000016">
    <property type="entry name" value="Histone H2B"/>
    <property type="match status" value="1"/>
</dbReference>
<dbReference type="Gene3D" id="1.10.20.10">
    <property type="entry name" value="Histone, subunit A"/>
    <property type="match status" value="1"/>
</dbReference>
<dbReference type="InterPro" id="IPR009072">
    <property type="entry name" value="Histone-fold"/>
</dbReference>
<dbReference type="InterPro" id="IPR007125">
    <property type="entry name" value="Histone_H2A/H2B/H3"/>
</dbReference>
<dbReference type="InterPro" id="IPR000558">
    <property type="entry name" value="Histone_H2B"/>
</dbReference>
<dbReference type="InterPro" id="IPR055333">
    <property type="entry name" value="HISTONE_H2B_site"/>
</dbReference>
<dbReference type="PANTHER" id="PTHR23428">
    <property type="entry name" value="HISTONE H2B"/>
    <property type="match status" value="1"/>
</dbReference>
<dbReference type="Pfam" id="PF00125">
    <property type="entry name" value="Histone"/>
    <property type="match status" value="1"/>
</dbReference>
<dbReference type="PRINTS" id="PR00621">
    <property type="entry name" value="HISTONEH2B"/>
</dbReference>
<dbReference type="SMART" id="SM00427">
    <property type="entry name" value="H2B"/>
    <property type="match status" value="1"/>
</dbReference>
<dbReference type="SUPFAM" id="SSF47113">
    <property type="entry name" value="Histone-fold"/>
    <property type="match status" value="1"/>
</dbReference>
<dbReference type="PROSITE" id="PS00357">
    <property type="entry name" value="HISTONE_H2B"/>
    <property type="match status" value="1"/>
</dbReference>
<feature type="initiator methionine" description="Removed" evidence="5">
    <location>
        <position position="1"/>
    </location>
</feature>
<feature type="chain" id="PRO_0000239651" description="Histone H2B.2, sperm">
    <location>
        <begin position="2"/>
        <end position="143"/>
    </location>
</feature>
<feature type="region of interest" description="Disordered" evidence="2">
    <location>
        <begin position="1"/>
        <end position="49"/>
    </location>
</feature>
<feature type="short sequence motif" description="SPKK motif 1">
    <location>
        <begin position="4"/>
        <end position="7"/>
    </location>
</feature>
<feature type="short sequence motif" description="SPKK motif 2">
    <location>
        <begin position="9"/>
        <end position="12"/>
    </location>
</feature>
<feature type="short sequence motif" description="SPKK motif 3">
    <location>
        <begin position="14"/>
        <end position="17"/>
    </location>
</feature>
<feature type="short sequence motif" description="SPKK motif 4">
    <location>
        <begin position="19"/>
        <end position="22"/>
    </location>
</feature>
<feature type="short sequence motif" description="SPKK motif 5">
    <location>
        <begin position="24"/>
        <end position="27"/>
    </location>
</feature>
<feature type="compositionally biased region" description="Basic residues" evidence="2">
    <location>
        <begin position="9"/>
        <end position="49"/>
    </location>
</feature>
<feature type="modified residue" description="Phosphoserine" evidence="3">
    <location>
        <position position="14"/>
    </location>
</feature>
<feature type="modified residue" description="Phosphoserine" evidence="3">
    <location>
        <position position="19"/>
    </location>
</feature>
<feature type="modified residue" description="Phosphoserine" evidence="3">
    <location>
        <position position="24"/>
    </location>
</feature>
<feature type="glycosylation site" description="O-linked (GlcNAc) serine" evidence="1">
    <location>
        <position position="129"/>
    </location>
</feature>
<feature type="cross-link" description="Glycyl lysine isopeptide (Lys-Gly) (interchain with G-Cter in ubiquitin)" evidence="1">
    <location>
        <position position="137"/>
    </location>
</feature>
<accession>Q27750</accession>
<reference key="1">
    <citation type="journal article" date="1978" name="Biochim. Biophys. Acta">
        <title>The partial amino acid sequences of the two H2B histones from sperm of the sea urchin Psammechinus miliaris.</title>
        <authorList>
            <person name="Strickland M."/>
            <person name="Strickland W.N."/>
            <person name="Brandt W.F."/>
            <person name="von Holt C."/>
        </authorList>
    </citation>
    <scope>PROTEIN SEQUENCE OF 2-44</scope>
</reference>
<reference key="2">
    <citation type="journal article" date="1990" name="EMBO J.">
        <title>Phosphorylation at clustered -Ser-Pro-X-Lys/Arg- motifs in sperm-specific histones H1 and H2B.</title>
        <authorList>
            <person name="Hill C.S."/>
            <person name="Packman L.C."/>
            <person name="Thomas J.O."/>
        </authorList>
    </citation>
    <scope>PROTEIN SEQUENCE OF 17-27</scope>
    <scope>PHOSPHORYLATION AT SER-14; SER-19 AND SER-24</scope>
</reference>
<reference key="3">
    <citation type="journal article" date="1985" name="Proc. Natl. Acad. Sci. U.S.A.">
        <title>Synthesis of sperm and late histone cDNAs of the sea urchin with a primer complementary to the conserved 3' terminal palindrome: evidence for tissue-specific and more general histone gene variants.</title>
        <authorList>
            <person name="Busslinger M."/>
            <person name="Barberis A."/>
        </authorList>
    </citation>
    <scope>NUCLEOTIDE SEQUENCE [MRNA] OF 41-143</scope>
    <scope>DEVELOPMENTAL STAGE</scope>
    <source>
        <tissue>Testis</tissue>
    </source>
</reference>
<name>H2BS2_PSAMI</name>